<keyword id="KW-0997">Cell inner membrane</keyword>
<keyword id="KW-1003">Cell membrane</keyword>
<keyword id="KW-0472">Membrane</keyword>
<keyword id="KW-1185">Reference proteome</keyword>
<keyword id="KW-0812">Transmembrane</keyword>
<keyword id="KW-1133">Transmembrane helix</keyword>
<reference key="1">
    <citation type="journal article" date="2009" name="J. Bacteriol.">
        <title>Complete genome sequence and comparative genome analysis of enteropathogenic Escherichia coli O127:H6 strain E2348/69.</title>
        <authorList>
            <person name="Iguchi A."/>
            <person name="Thomson N.R."/>
            <person name="Ogura Y."/>
            <person name="Saunders D."/>
            <person name="Ooka T."/>
            <person name="Henderson I.R."/>
            <person name="Harris D."/>
            <person name="Asadulghani M."/>
            <person name="Kurokawa K."/>
            <person name="Dean P."/>
            <person name="Kenny B."/>
            <person name="Quail M.A."/>
            <person name="Thurston S."/>
            <person name="Dougan G."/>
            <person name="Hayashi T."/>
            <person name="Parkhill J."/>
            <person name="Frankel G."/>
        </authorList>
    </citation>
    <scope>NUCLEOTIDE SEQUENCE [LARGE SCALE GENOMIC DNA]</scope>
    <source>
        <strain>E2348/69 / EPEC</strain>
    </source>
</reference>
<accession>B7UFF7</accession>
<evidence type="ECO:0000255" key="1">
    <source>
        <dbReference type="HAMAP-Rule" id="MF_01144"/>
    </source>
</evidence>
<protein>
    <recommendedName>
        <fullName evidence="1">UPF0299 membrane protein YohJ</fullName>
    </recommendedName>
</protein>
<proteinExistence type="inferred from homology"/>
<feature type="chain" id="PRO_1000164106" description="UPF0299 membrane protein YohJ">
    <location>
        <begin position="1"/>
        <end position="132"/>
    </location>
</feature>
<feature type="transmembrane region" description="Helical" evidence="1">
    <location>
        <begin position="7"/>
        <end position="27"/>
    </location>
</feature>
<feature type="transmembrane region" description="Helical" evidence="1">
    <location>
        <begin position="31"/>
        <end position="51"/>
    </location>
</feature>
<feature type="transmembrane region" description="Helical" evidence="1">
    <location>
        <begin position="63"/>
        <end position="83"/>
    </location>
</feature>
<feature type="transmembrane region" description="Helical" evidence="1">
    <location>
        <begin position="93"/>
        <end position="113"/>
    </location>
</feature>
<gene>
    <name evidence="1" type="primary">yohJ</name>
    <name type="ordered locus">E2348C_2287</name>
</gene>
<sequence>MSKTLNIIWQYLRAFVLIYACLYAGIFIASLLPVTIPGSIIGMLILFVLLALQILPAKWVNPGCYVLIRYMALLFVPIGVGVMQYFDLLRAQFGPVVVSCAVSTLVVFLVVSWSSQLVHGERKVVGQKGSEE</sequence>
<name>YOHJ_ECO27</name>
<dbReference type="EMBL" id="FM180568">
    <property type="protein sequence ID" value="CAS09835.1"/>
    <property type="molecule type" value="Genomic_DNA"/>
</dbReference>
<dbReference type="RefSeq" id="WP_001295452.1">
    <property type="nucleotide sequence ID" value="NC_011601.1"/>
</dbReference>
<dbReference type="SMR" id="B7UFF7"/>
<dbReference type="KEGG" id="ecg:E2348C_2287"/>
<dbReference type="HOGENOM" id="CLU_113736_1_1_6"/>
<dbReference type="Proteomes" id="UP000008205">
    <property type="component" value="Chromosome"/>
</dbReference>
<dbReference type="GO" id="GO:0005886">
    <property type="term" value="C:plasma membrane"/>
    <property type="evidence" value="ECO:0007669"/>
    <property type="project" value="UniProtKB-SubCell"/>
</dbReference>
<dbReference type="HAMAP" id="MF_01144">
    <property type="entry name" value="UPF0299"/>
    <property type="match status" value="1"/>
</dbReference>
<dbReference type="InterPro" id="IPR005538">
    <property type="entry name" value="LrgA/CidA"/>
</dbReference>
<dbReference type="InterPro" id="IPR022957">
    <property type="entry name" value="Uncharacterised_UPF0299"/>
</dbReference>
<dbReference type="NCBIfam" id="NF002494">
    <property type="entry name" value="PRK01821.1"/>
    <property type="match status" value="1"/>
</dbReference>
<dbReference type="PANTHER" id="PTHR33931">
    <property type="entry name" value="HOLIN-LIKE PROTEIN CIDA-RELATED"/>
    <property type="match status" value="1"/>
</dbReference>
<dbReference type="PANTHER" id="PTHR33931:SF5">
    <property type="entry name" value="UPF0299 MEMBRANE PROTEIN YOHJ"/>
    <property type="match status" value="1"/>
</dbReference>
<dbReference type="Pfam" id="PF03788">
    <property type="entry name" value="LrgA"/>
    <property type="match status" value="1"/>
</dbReference>
<comment type="subcellular location">
    <subcellularLocation>
        <location evidence="1">Cell inner membrane</location>
        <topology evidence="1">Multi-pass membrane protein</topology>
    </subcellularLocation>
</comment>
<comment type="similarity">
    <text evidence="1">Belongs to the UPF0299 family.</text>
</comment>
<organism>
    <name type="scientific">Escherichia coli O127:H6 (strain E2348/69 / EPEC)</name>
    <dbReference type="NCBI Taxonomy" id="574521"/>
    <lineage>
        <taxon>Bacteria</taxon>
        <taxon>Pseudomonadati</taxon>
        <taxon>Pseudomonadota</taxon>
        <taxon>Gammaproteobacteria</taxon>
        <taxon>Enterobacterales</taxon>
        <taxon>Enterobacteriaceae</taxon>
        <taxon>Escherichia</taxon>
    </lineage>
</organism>